<name>WAAF_CAMJ8</name>
<feature type="chain" id="PRO_0000459172" description="Lipooligosaccharide heptosyltransferase 2">
    <location>
        <begin position="1"/>
        <end position="316"/>
    </location>
</feature>
<evidence type="ECO:0000250" key="1">
    <source>
        <dbReference type="UniProtKB" id="P37692"/>
    </source>
</evidence>
<evidence type="ECO:0000269" key="2">
    <source>
    </source>
</evidence>
<evidence type="ECO:0000303" key="3">
    <source>
    </source>
</evidence>
<evidence type="ECO:0000305" key="4"/>
<evidence type="ECO:0000305" key="5">
    <source>
    </source>
</evidence>
<evidence type="ECO:0000312" key="6">
    <source>
        <dbReference type="EMBL" id="ABV52691.1"/>
    </source>
</evidence>
<proteinExistence type="inferred from homology"/>
<organism>
    <name type="scientific">Campylobacter jejuni subsp. jejuni serotype O:6 (strain 81116 / NCTC 11828)</name>
    <dbReference type="NCBI Taxonomy" id="407148"/>
    <lineage>
        <taxon>Bacteria</taxon>
        <taxon>Pseudomonadati</taxon>
        <taxon>Campylobacterota</taxon>
        <taxon>Epsilonproteobacteria</taxon>
        <taxon>Campylobacterales</taxon>
        <taxon>Campylobacteraceae</taxon>
        <taxon>Campylobacter</taxon>
    </lineage>
</organism>
<comment type="function">
    <text evidence="5">Glycosyltransferase involved in the biosynthesis of the core oligosaccharide region of lipooligosaccharide (LOS) (Probable). Catalyzes the addition of the second heptose unit to the heptosyl-Kdo2-lipid A module (Probable).</text>
</comment>
<comment type="catalytic activity">
    <reaction evidence="1">
        <text>an L-alpha-D-Hep-(1-&gt;5)-[alpha-Kdo-(2-&gt;4)]-alpha-Kdo-(2-&gt;6)-lipid A + ADP-L-glycero-beta-D-manno-heptose = an L-alpha-D-Hep-(1-&gt;3)-L-alpha-D-Hep-(1-&gt;5)-[alpha-Kdo-(2-&gt;4)]-alpha-Kdo-(2-&gt;6)-lipid A + ADP + H(+)</text>
        <dbReference type="Rhea" id="RHEA:74071"/>
        <dbReference type="ChEBI" id="CHEBI:15378"/>
        <dbReference type="ChEBI" id="CHEBI:61506"/>
        <dbReference type="ChEBI" id="CHEBI:193068"/>
        <dbReference type="ChEBI" id="CHEBI:193069"/>
        <dbReference type="ChEBI" id="CHEBI:456216"/>
        <dbReference type="EC" id="2.4.99.24"/>
    </reaction>
</comment>
<comment type="pathway">
    <text evidence="2">Bacterial outer membrane biogenesis; LOS core biosynthesis.</text>
</comment>
<comment type="disruption phenotype">
    <text evidence="2">Mutant synthesizes a truncated LOS molecule, but mutation does not affect the mobility and intensity of the high-molecular-weight polysaccharides.</text>
</comment>
<comment type="similarity">
    <text evidence="4">Belongs to the glycosyltransferase 9 family.</text>
</comment>
<accession>P0DX62</accession>
<reference key="1">
    <citation type="journal article" date="2002" name="J. Bacteriol.">
        <title>Characterization of the Campylobacter jejuni heptosyltransferase II gene, waaF, provides genetic evidence that extracellular polysaccharide is lipid A core independent.</title>
        <authorList>
            <person name="Oldfield N.J."/>
            <person name="Moran A.P."/>
            <person name="Millar L.A."/>
            <person name="Prendergast M.M."/>
            <person name="Ketley J.M."/>
        </authorList>
    </citation>
    <scope>NUCLEOTIDE SEQUENCE [GENOMIC DNA]</scope>
    <scope>FUNCTION</scope>
    <scope>PATHWAY</scope>
    <scope>DISRUPTION PHENOTYPE</scope>
    <source>
        <strain>81116 / NCTC 11828</strain>
    </source>
</reference>
<reference key="2">
    <citation type="journal article" date="2007" name="J. Bacteriol.">
        <title>The complete genome sequence of Campylobacter jejuni strain 81116 (NCTC11828).</title>
        <authorList>
            <person name="Pearson B.M."/>
            <person name="Gaskin D.J.H."/>
            <person name="Segers R.P.A.M."/>
            <person name="Wells J.M."/>
            <person name="Nuijten P.J.M."/>
            <person name="van Vliet A.H.M."/>
        </authorList>
    </citation>
    <scope>NUCLEOTIDE SEQUENCE [LARGE SCALE GENOMIC DNA]</scope>
    <source>
        <strain>81116 / NCTC 11828</strain>
    </source>
</reference>
<protein>
    <recommendedName>
        <fullName evidence="4">Lipooligosaccharide heptosyltransferase 2</fullName>
        <ecNumber evidence="1">2.4.99.24</ecNumber>
    </recommendedName>
    <alternativeName>
        <fullName evidence="4">ADP-heptose:lipooligosaccharide heptosyltransferase II</fullName>
        <shortName evidence="4">ADP-heptose:LOS heptosyltransferase II</shortName>
        <shortName evidence="3">Heptosyltransferase II</shortName>
    </alternativeName>
</protein>
<gene>
    <name evidence="3" type="primary">waaF</name>
    <name evidence="6" type="ordered locus">C8J_1092</name>
</gene>
<sequence length="316" mass="36379">MKIFIHLPTWLGDAVMASPALYAIKEHFKNTQFILYGSLVSTALFREFPNSKIIIENKQTRYKQALSLRKELGKIDLSFAFRSAFSSKIILHILKTKQRYFFDKNKHKEEHQVLKYLYFIENSLSIKAHFKDLKLPFKLKFQNPLILKNGKKILGLNPGASFGSAKRWDASYFAKVALNFSQSHEILIFGAGKAEQELCNEIYQILKEQNIKVKNLCNKTTIKTLCQNIAFCDLFITNDSGPMHISTVYKIKTVAIFGPTKFTQTSPWQNQNAKLVHLDLACMPCMQKTCPLKHHKCMKDLKPEKVIEEIKKLSTP</sequence>
<keyword id="KW-0328">Glycosyltransferase</keyword>
<keyword id="KW-0808">Transferase</keyword>
<dbReference type="EC" id="2.4.99.24" evidence="1"/>
<dbReference type="EMBL" id="AF343914">
    <property type="status" value="NOT_ANNOTATED_CDS"/>
    <property type="molecule type" value="Genomic_DNA"/>
</dbReference>
<dbReference type="EMBL" id="CP000814">
    <property type="protein sequence ID" value="ABV52691.1"/>
    <property type="molecule type" value="Genomic_DNA"/>
</dbReference>
<dbReference type="RefSeq" id="WP_002866164.1">
    <property type="nucleotide sequence ID" value="NC_009839.1"/>
</dbReference>
<dbReference type="SMR" id="P0DX62"/>
<dbReference type="KEGG" id="cju:C8J_1092"/>
<dbReference type="UniPathway" id="UPA00976"/>
<dbReference type="GO" id="GO:0005829">
    <property type="term" value="C:cytosol"/>
    <property type="evidence" value="ECO:0007669"/>
    <property type="project" value="TreeGrafter"/>
</dbReference>
<dbReference type="GO" id="GO:0008713">
    <property type="term" value="F:ADP-heptose-lipopolysaccharide heptosyltransferase activity"/>
    <property type="evidence" value="ECO:0007669"/>
    <property type="project" value="TreeGrafter"/>
</dbReference>
<dbReference type="GO" id="GO:0009244">
    <property type="term" value="P:lipopolysaccharide core region biosynthetic process"/>
    <property type="evidence" value="ECO:0007669"/>
    <property type="project" value="TreeGrafter"/>
</dbReference>
<dbReference type="CDD" id="cd03789">
    <property type="entry name" value="GT9_LPS_heptosyltransferase"/>
    <property type="match status" value="1"/>
</dbReference>
<dbReference type="Gene3D" id="3.40.50.2000">
    <property type="entry name" value="Glycogen Phosphorylase B"/>
    <property type="match status" value="2"/>
</dbReference>
<dbReference type="InterPro" id="IPR002201">
    <property type="entry name" value="Glyco_trans_9"/>
</dbReference>
<dbReference type="InterPro" id="IPR051199">
    <property type="entry name" value="LPS_LOS_Heptosyltrfase"/>
</dbReference>
<dbReference type="InterPro" id="IPR011910">
    <property type="entry name" value="RfaF"/>
</dbReference>
<dbReference type="NCBIfam" id="TIGR02195">
    <property type="entry name" value="heptsyl_trn_II"/>
    <property type="match status" value="1"/>
</dbReference>
<dbReference type="PANTHER" id="PTHR30160:SF7">
    <property type="entry name" value="ADP-HEPTOSE--LPS HEPTOSYLTRANSFERASE 2"/>
    <property type="match status" value="1"/>
</dbReference>
<dbReference type="PANTHER" id="PTHR30160">
    <property type="entry name" value="TETRAACYLDISACCHARIDE 4'-KINASE-RELATED"/>
    <property type="match status" value="1"/>
</dbReference>
<dbReference type="Pfam" id="PF01075">
    <property type="entry name" value="Glyco_transf_9"/>
    <property type="match status" value="1"/>
</dbReference>
<dbReference type="SUPFAM" id="SSF53756">
    <property type="entry name" value="UDP-Glycosyltransferase/glycogen phosphorylase"/>
    <property type="match status" value="1"/>
</dbReference>